<proteinExistence type="inferred from homology"/>
<keyword id="KW-0227">DNA damage</keyword>
<keyword id="KW-0233">DNA recombination</keyword>
<keyword id="KW-0234">DNA repair</keyword>
<comment type="function">
    <text evidence="1">Involved in DNA repair and RecF pathway recombination.</text>
</comment>
<comment type="similarity">
    <text evidence="1">Belongs to the RecO family.</text>
</comment>
<name>RECO_DEHMC</name>
<protein>
    <recommendedName>
        <fullName evidence="1">DNA repair protein RecO</fullName>
    </recommendedName>
    <alternativeName>
        <fullName evidence="1">Recombination protein O</fullName>
    </alternativeName>
</protein>
<reference key="1">
    <citation type="journal article" date="2005" name="Nat. Biotechnol.">
        <title>Genome sequence of the chlorinated compound-respiring bacterium Dehalococcoides species strain CBDB1.</title>
        <authorList>
            <person name="Kube M."/>
            <person name="Beck A."/>
            <person name="Zinder S.H."/>
            <person name="Kuhl H."/>
            <person name="Reinhardt R."/>
            <person name="Adrian L."/>
        </authorList>
    </citation>
    <scope>NUCLEOTIDE SEQUENCE [LARGE SCALE GENOMIC DNA]</scope>
    <source>
        <strain>CBDB1</strain>
    </source>
</reference>
<feature type="chain" id="PRO_0000227041" description="DNA repair protein RecO">
    <location>
        <begin position="1"/>
        <end position="253"/>
    </location>
</feature>
<gene>
    <name evidence="1" type="primary">recO</name>
    <name type="ordered locus">cbdbA557</name>
</gene>
<dbReference type="EMBL" id="AJ965256">
    <property type="protein sequence ID" value="CAI82741.1"/>
    <property type="molecule type" value="Genomic_DNA"/>
</dbReference>
<dbReference type="RefSeq" id="WP_011309092.1">
    <property type="nucleotide sequence ID" value="NC_007356.1"/>
</dbReference>
<dbReference type="SMR" id="Q3ZWX7"/>
<dbReference type="KEGG" id="deh:cbdbA557"/>
<dbReference type="HOGENOM" id="CLU_066632_1_0_0"/>
<dbReference type="Proteomes" id="UP000000433">
    <property type="component" value="Chromosome"/>
</dbReference>
<dbReference type="GO" id="GO:0043590">
    <property type="term" value="C:bacterial nucleoid"/>
    <property type="evidence" value="ECO:0007669"/>
    <property type="project" value="TreeGrafter"/>
</dbReference>
<dbReference type="GO" id="GO:0006310">
    <property type="term" value="P:DNA recombination"/>
    <property type="evidence" value="ECO:0007669"/>
    <property type="project" value="UniProtKB-UniRule"/>
</dbReference>
<dbReference type="GO" id="GO:0006302">
    <property type="term" value="P:double-strand break repair"/>
    <property type="evidence" value="ECO:0007669"/>
    <property type="project" value="TreeGrafter"/>
</dbReference>
<dbReference type="Gene3D" id="2.40.50.140">
    <property type="entry name" value="Nucleic acid-binding proteins"/>
    <property type="match status" value="1"/>
</dbReference>
<dbReference type="Gene3D" id="1.20.1440.120">
    <property type="entry name" value="Recombination protein O, C-terminal domain"/>
    <property type="match status" value="1"/>
</dbReference>
<dbReference type="HAMAP" id="MF_00201">
    <property type="entry name" value="RecO"/>
    <property type="match status" value="1"/>
</dbReference>
<dbReference type="InterPro" id="IPR037278">
    <property type="entry name" value="ARFGAP/RecO"/>
</dbReference>
<dbReference type="InterPro" id="IPR022572">
    <property type="entry name" value="DNA_rep/recomb_RecO_N"/>
</dbReference>
<dbReference type="InterPro" id="IPR012340">
    <property type="entry name" value="NA-bd_OB-fold"/>
</dbReference>
<dbReference type="InterPro" id="IPR003717">
    <property type="entry name" value="RecO"/>
</dbReference>
<dbReference type="InterPro" id="IPR042242">
    <property type="entry name" value="RecO_C"/>
</dbReference>
<dbReference type="NCBIfam" id="TIGR00613">
    <property type="entry name" value="reco"/>
    <property type="match status" value="1"/>
</dbReference>
<dbReference type="PANTHER" id="PTHR33991">
    <property type="entry name" value="DNA REPAIR PROTEIN RECO"/>
    <property type="match status" value="1"/>
</dbReference>
<dbReference type="PANTHER" id="PTHR33991:SF1">
    <property type="entry name" value="DNA REPAIR PROTEIN RECO"/>
    <property type="match status" value="1"/>
</dbReference>
<dbReference type="Pfam" id="PF02565">
    <property type="entry name" value="RecO_C"/>
    <property type="match status" value="1"/>
</dbReference>
<dbReference type="Pfam" id="PF11967">
    <property type="entry name" value="RecO_N"/>
    <property type="match status" value="1"/>
</dbReference>
<dbReference type="SUPFAM" id="SSF57863">
    <property type="entry name" value="ArfGap/RecO-like zinc finger"/>
    <property type="match status" value="1"/>
</dbReference>
<dbReference type="SUPFAM" id="SSF50249">
    <property type="entry name" value="Nucleic acid-binding proteins"/>
    <property type="match status" value="1"/>
</dbReference>
<evidence type="ECO:0000255" key="1">
    <source>
        <dbReference type="HAMAP-Rule" id="MF_00201"/>
    </source>
</evidence>
<accession>Q3ZWX7</accession>
<organism>
    <name type="scientific">Dehalococcoides mccartyi (strain CBDB1)</name>
    <dbReference type="NCBI Taxonomy" id="255470"/>
    <lineage>
        <taxon>Bacteria</taxon>
        <taxon>Bacillati</taxon>
        <taxon>Chloroflexota</taxon>
        <taxon>Dehalococcoidia</taxon>
        <taxon>Dehalococcoidales</taxon>
        <taxon>Dehalococcoidaceae</taxon>
        <taxon>Dehalococcoides</taxon>
    </lineage>
</organism>
<sequence>MTKPHDFKTKAIIVRKTKCGEADRILSLLTPDLGLIQGFAKSVRKTKSKLSGHLELLCYSEVSLARGKAIDTITGSQTIQSFLNIRNSLQLSAMAFYACELAYHFSPEEAANPAMFQLLLSTLEELDNGSQPELCLKYFEINLLASSGYKPELRECANCHKKLQATINYYSPESGGVICPNCRNTQIGMPVSVNTVKVLRYIQENSFSSICRLKINREILSELELAIRANIRFVLEKEPKALLWLDSLRLADL</sequence>